<evidence type="ECO:0000250" key="1"/>
<evidence type="ECO:0000250" key="2">
    <source>
        <dbReference type="UniProtKB" id="P18090"/>
    </source>
</evidence>
<evidence type="ECO:0000250" key="3">
    <source>
        <dbReference type="UniProtKB" id="P34971"/>
    </source>
</evidence>
<evidence type="ECO:0000255" key="4">
    <source>
        <dbReference type="PROSITE-ProRule" id="PRU00521"/>
    </source>
</evidence>
<evidence type="ECO:0000256" key="5">
    <source>
        <dbReference type="SAM" id="MobiDB-lite"/>
    </source>
</evidence>
<evidence type="ECO:0000269" key="6">
    <source>
    </source>
</evidence>
<evidence type="ECO:0000305" key="7"/>
<evidence type="ECO:0007744" key="8">
    <source>
        <dbReference type="PDB" id="2VT4"/>
    </source>
</evidence>
<evidence type="ECO:0007829" key="9">
    <source>
        <dbReference type="PDB" id="2Y03"/>
    </source>
</evidence>
<evidence type="ECO:0007829" key="10">
    <source>
        <dbReference type="PDB" id="4AMJ"/>
    </source>
</evidence>
<evidence type="ECO:0007829" key="11">
    <source>
        <dbReference type="PDB" id="4BVN"/>
    </source>
</evidence>
<evidence type="ECO:0007829" key="12">
    <source>
        <dbReference type="PDB" id="6TKO"/>
    </source>
</evidence>
<accession>P07700</accession>
<feature type="chain" id="PRO_0000069120" description="Beta-1 adrenergic receptor">
    <location>
        <begin position="1"/>
        <end position="483"/>
    </location>
</feature>
<feature type="topological domain" description="Extracellular" evidence="6">
    <location>
        <begin position="1"/>
        <end position="38"/>
    </location>
</feature>
<feature type="transmembrane region" description="Helical; Name=1">
    <location>
        <begin position="39"/>
        <end position="67"/>
    </location>
</feature>
<feature type="topological domain" description="Cytoplasmic" evidence="6">
    <location>
        <begin position="68"/>
        <end position="76"/>
    </location>
</feature>
<feature type="transmembrane region" description="Helical; Name=2">
    <location>
        <begin position="77"/>
        <end position="103"/>
    </location>
</feature>
<feature type="topological domain" description="Extracellular" evidence="6">
    <location>
        <begin position="104"/>
        <end position="115"/>
    </location>
</feature>
<feature type="transmembrane region" description="Helical; Name=3">
    <location>
        <begin position="116"/>
        <end position="137"/>
    </location>
</feature>
<feature type="topological domain" description="Cytoplasmic" evidence="6">
    <location>
        <begin position="138"/>
        <end position="155"/>
    </location>
</feature>
<feature type="transmembrane region" description="Helical; Name=4">
    <location>
        <begin position="156"/>
        <end position="179"/>
    </location>
</feature>
<feature type="topological domain" description="Extracellular" evidence="6">
    <location>
        <begin position="180"/>
        <end position="205"/>
    </location>
</feature>
<feature type="transmembrane region" description="Helical; Name=5">
    <location>
        <begin position="206"/>
        <end position="231"/>
    </location>
</feature>
<feature type="topological domain" description="Cytoplasmic" evidence="6">
    <location>
        <begin position="232"/>
        <end position="285"/>
    </location>
</feature>
<feature type="transmembrane region" description="Helical; Name=6">
    <location>
        <begin position="286"/>
        <end position="315"/>
    </location>
</feature>
<feature type="topological domain" description="Extracellular" evidence="6">
    <location>
        <begin position="316"/>
        <end position="320"/>
    </location>
</feature>
<feature type="transmembrane region" description="Helical; Name=7">
    <location>
        <begin position="321"/>
        <end position="343"/>
    </location>
</feature>
<feature type="topological domain" description="Cytoplasmic" evidence="6">
    <location>
        <begin position="344"/>
        <end position="483"/>
    </location>
</feature>
<feature type="region of interest" description="Disordered" evidence="5">
    <location>
        <begin position="1"/>
        <end position="26"/>
    </location>
</feature>
<feature type="region of interest" description="Disordered" evidence="5">
    <location>
        <begin position="250"/>
        <end position="270"/>
    </location>
</feature>
<feature type="region of interest" description="Disordered" evidence="5">
    <location>
        <begin position="387"/>
        <end position="425"/>
    </location>
</feature>
<feature type="compositionally biased region" description="Basic and acidic residues" evidence="5">
    <location>
        <begin position="410"/>
        <end position="425"/>
    </location>
</feature>
<feature type="binding site" evidence="6 8">
    <location>
        <position position="121"/>
    </location>
    <ligand>
        <name>cyanopindolol</name>
        <dbReference type="ChEBI" id="CHEBI:187894"/>
        <note>antagonist</note>
    </ligand>
</feature>
<feature type="binding site" evidence="6 8">
    <location>
        <position position="211"/>
    </location>
    <ligand>
        <name>cyanopindolol</name>
        <dbReference type="ChEBI" id="CHEBI:187894"/>
        <note>antagonist</note>
    </ligand>
</feature>
<feature type="binding site" evidence="6 8">
    <location>
        <position position="329"/>
    </location>
    <ligand>
        <name>cyanopindolol</name>
        <dbReference type="ChEBI" id="CHEBI:187894"/>
        <note>antagonist</note>
    </ligand>
</feature>
<feature type="lipid moiety-binding region" description="S-palmitoyl cysteine" evidence="1">
    <location>
        <position position="358"/>
    </location>
</feature>
<feature type="glycosylation site" description="N-linked (GlcNAc...) asparagine" evidence="7">
    <location>
        <position position="14"/>
    </location>
</feature>
<feature type="disulfide bond" evidence="4 6">
    <location>
        <begin position="114"/>
        <end position="199"/>
    </location>
</feature>
<feature type="disulfide bond" evidence="4 6">
    <location>
        <begin position="192"/>
        <end position="198"/>
    </location>
</feature>
<feature type="helix" evidence="11">
    <location>
        <begin position="37"/>
        <end position="68"/>
    </location>
</feature>
<feature type="helix" evidence="11">
    <location>
        <begin position="70"/>
        <end position="72"/>
    </location>
</feature>
<feature type="helix" evidence="11">
    <location>
        <begin position="75"/>
        <end position="92"/>
    </location>
</feature>
<feature type="helix" evidence="11">
    <location>
        <begin position="94"/>
        <end position="104"/>
    </location>
</feature>
<feature type="helix" evidence="11">
    <location>
        <begin position="110"/>
        <end position="144"/>
    </location>
</feature>
<feature type="helix" evidence="11">
    <location>
        <begin position="146"/>
        <end position="152"/>
    </location>
</feature>
<feature type="helix" evidence="11">
    <location>
        <begin position="155"/>
        <end position="178"/>
    </location>
</feature>
<feature type="turn" evidence="11">
    <location>
        <begin position="179"/>
        <end position="182"/>
    </location>
</feature>
<feature type="helix" evidence="11">
    <location>
        <begin position="187"/>
        <end position="194"/>
    </location>
</feature>
<feature type="strand" evidence="12">
    <location>
        <begin position="195"/>
        <end position="197"/>
    </location>
</feature>
<feature type="helix" evidence="11">
    <location>
        <begin position="205"/>
        <end position="215"/>
    </location>
</feature>
<feature type="helix" evidence="11">
    <location>
        <begin position="217"/>
        <end position="239"/>
    </location>
</feature>
<feature type="turn" evidence="9">
    <location>
        <begin position="240"/>
        <end position="242"/>
    </location>
</feature>
<feature type="helix" evidence="10">
    <location>
        <begin position="272"/>
        <end position="274"/>
    </location>
</feature>
<feature type="turn" evidence="10">
    <location>
        <begin position="275"/>
        <end position="277"/>
    </location>
</feature>
<feature type="helix" evidence="11">
    <location>
        <begin position="279"/>
        <end position="315"/>
    </location>
</feature>
<feature type="helix" evidence="11">
    <location>
        <begin position="317"/>
        <end position="319"/>
    </location>
</feature>
<feature type="helix" evidence="11">
    <location>
        <begin position="322"/>
        <end position="343"/>
    </location>
</feature>
<feature type="helix" evidence="11">
    <location>
        <begin position="347"/>
        <end position="356"/>
    </location>
</feature>
<protein>
    <recommendedName>
        <fullName>Beta-1 adrenergic receptor</fullName>
    </recommendedName>
    <alternativeName>
        <fullName>Beta-1 adrenoreceptor</fullName>
        <shortName>Beta-1 adrenoceptor</shortName>
        <shortName>Beta-T</shortName>
    </alternativeName>
</protein>
<name>ADRB1_MELGA</name>
<keyword id="KW-0002">3D-structure</keyword>
<keyword id="KW-1003">Cell membrane</keyword>
<keyword id="KW-1015">Disulfide bond</keyword>
<keyword id="KW-0967">Endosome</keyword>
<keyword id="KW-0297">G-protein coupled receptor</keyword>
<keyword id="KW-0325">Glycoprotein</keyword>
<keyword id="KW-0449">Lipoprotein</keyword>
<keyword id="KW-0472">Membrane</keyword>
<keyword id="KW-0564">Palmitate</keyword>
<keyword id="KW-0597">Phosphoprotein</keyword>
<keyword id="KW-0675">Receptor</keyword>
<keyword id="KW-1185">Reference proteome</keyword>
<keyword id="KW-0807">Transducer</keyword>
<keyword id="KW-0812">Transmembrane</keyword>
<keyword id="KW-1133">Transmembrane helix</keyword>
<reference key="1">
    <citation type="journal article" date="1986" name="Proc. Natl. Acad. Sci. U.S.A.">
        <title>The avian beta-adrenergic receptor: primary structure and membrane topology.</title>
        <authorList>
            <person name="Yarden Y."/>
            <person name="Rodriguez H."/>
            <person name="Wong S.K.-F."/>
            <person name="Brandt D.R."/>
            <person name="May D.C."/>
            <person name="Burnier J."/>
            <person name="Harkins R.N."/>
            <person name="Chen E.Y."/>
            <person name="Ramachandran J."/>
            <person name="Ullrich A."/>
            <person name="Ross E.M."/>
        </authorList>
    </citation>
    <scope>NUCLEOTIDE SEQUENCE [MRNA]</scope>
</reference>
<reference key="2">
    <citation type="journal article" date="1995" name="FEBS Lett.">
        <title>NMR and circular dichroism studies of synthetic peptides derived from the third intracellular loop of the beta-adrenoceptor.</title>
        <authorList>
            <person name="Jung H."/>
            <person name="Windhaber R."/>
            <person name="Palm D."/>
            <person name="Schnackerz K.D."/>
        </authorList>
    </citation>
    <scope>STRUCTURE BY NMR OF 345-359</scope>
</reference>
<reference evidence="8" key="3">
    <citation type="journal article" date="2008" name="Nature">
        <title>Structure of a beta1-adrenergic G-protein-coupled receptor.</title>
        <authorList>
            <person name="Warne T."/>
            <person name="Serrano-Vega M.J."/>
            <person name="Baker J.G."/>
            <person name="Moukhametzianov R."/>
            <person name="Edwards P.C."/>
            <person name="Henderson R."/>
            <person name="Leslie A.G.W."/>
            <person name="Tate C.G."/>
            <person name="Schertler G.F.X."/>
        </authorList>
    </citation>
    <scope>X-RAY CRYSTALLOGRAPHY (2.7 ANGSTROMS) OF 33-367 IN COMPLEX WITH THE ANTAGONIST CYANOPINDOLOL</scope>
    <scope>DISULFIDE BONDS</scope>
    <scope>FUNCTION</scope>
    <scope>TOPOLOGY</scope>
</reference>
<sequence>MGDGWLPPDCGPHNRSGGGGATAAPTGSRQVSAELLSQQWEAGMSLLMALVVLLIVAGNVLVIAAIGRTQRLQTLTNLFITSLACADLVMGLLVVPFGATLVVRGTWLWGSFLCECWTSLDVLCVTASIETLCVIAIDRYLAITSPFRYQSLMTRARAKVIICTVWAISALVSFLPIMMHWWRDEDPQALKCYQDPGCCDFVTNRAYAIASSIISFYIPLLIMIFVYLRVYREAKEQIRKIDRCEGRFYGSQEQPQPPPLPQHQPILGNGRASKRKTSRVMAMREHKALKTLGIIMGVFTLCWLPFFLVNIVNVFNRDLVPDWLFVFFNWLGYANSAFNPIIYCRSPDFRKAFKRLLCFPRKADRRLHAGGQPAPLPGGFISTLGSPEHSPGGTWSDCNGGTRGGSESSLEERHSKTSRSESKMEREKNILATTRFYCTFLGNGDKAVFCTVLRIVKLFEDATCTCPHTHKLKMKWRFKQHQA</sequence>
<comment type="function">
    <text evidence="3 6">Beta-adrenergic receptors mediate the catecholamine-induced activation of adenylate cyclase through the action of G proteins. This receptor binds epinephrine and norepinephrine with approximately equal affinity (PubMed:18594507). In dorsal pons neurons, involved in the regulation of sleep/wake behaviors (By similarity).</text>
</comment>
<comment type="interaction">
    <interactant intactId="EBI-16038126">
        <id>P07700</id>
    </interactant>
    <interactant intactId="EBI-16038126">
        <id>P07700</id>
        <label>ADRB1</label>
    </interactant>
    <organismsDiffer>false</organismsDiffer>
    <experiments>3</experiments>
</comment>
<comment type="subcellular location">
    <subcellularLocation>
        <location evidence="2">Cell membrane</location>
        <topology evidence="2">Multi-pass membrane protein</topology>
    </subcellularLocation>
    <subcellularLocation>
        <location evidence="1">Early endosome</location>
    </subcellularLocation>
    <text evidence="1">Colocalizes with RAPGEF2 at the plasma membrane. Found in the Golgi upon GOPC overexpression (By similarity).</text>
</comment>
<comment type="PTM">
    <text>Homologous desensitization of the receptor is mediated by its phosphorylation by beta-adrenergic receptor kinase.</text>
</comment>
<comment type="similarity">
    <text evidence="4">Belongs to the G-protein coupled receptor 1 family. Adrenergic receptor subfamily. ADRB1 sub-subfamily.</text>
</comment>
<proteinExistence type="evidence at protein level"/>
<gene>
    <name type="primary">ADRB1</name>
</gene>
<dbReference type="EMBL" id="M14379">
    <property type="protein sequence ID" value="AAA49627.1"/>
    <property type="molecule type" value="mRNA"/>
</dbReference>
<dbReference type="PIR" id="A25896">
    <property type="entry name" value="A25896"/>
</dbReference>
<dbReference type="RefSeq" id="NP_001290104.1">
    <property type="nucleotide sequence ID" value="NM_001303175.1"/>
</dbReference>
<dbReference type="PDB" id="1DEP">
    <property type="method" value="NMR"/>
    <property type="chains" value="A=345-359"/>
</dbReference>
<dbReference type="PDB" id="2VT4">
    <property type="method" value="X-ray"/>
    <property type="resolution" value="2.70 A"/>
    <property type="chains" value="A/B/C/D=33-367"/>
</dbReference>
<dbReference type="PDB" id="2Y00">
    <property type="method" value="X-ray"/>
    <property type="resolution" value="2.50 A"/>
    <property type="chains" value="A/B=33-368"/>
</dbReference>
<dbReference type="PDB" id="2Y01">
    <property type="method" value="X-ray"/>
    <property type="resolution" value="2.60 A"/>
    <property type="chains" value="A/B=33-368"/>
</dbReference>
<dbReference type="PDB" id="2Y02">
    <property type="method" value="X-ray"/>
    <property type="resolution" value="2.60 A"/>
    <property type="chains" value="A/B=33-368"/>
</dbReference>
<dbReference type="PDB" id="2Y03">
    <property type="method" value="X-ray"/>
    <property type="resolution" value="2.85 A"/>
    <property type="chains" value="A/B=33-368"/>
</dbReference>
<dbReference type="PDB" id="2Y04">
    <property type="method" value="X-ray"/>
    <property type="resolution" value="3.05 A"/>
    <property type="chains" value="A/B=33-368"/>
</dbReference>
<dbReference type="PDB" id="2YCW">
    <property type="method" value="X-ray"/>
    <property type="resolution" value="3.00 A"/>
    <property type="chains" value="A/B=33-367"/>
</dbReference>
<dbReference type="PDB" id="2YCX">
    <property type="method" value="X-ray"/>
    <property type="resolution" value="3.25 A"/>
    <property type="chains" value="A/B=33-367"/>
</dbReference>
<dbReference type="PDB" id="2YCY">
    <property type="method" value="X-ray"/>
    <property type="resolution" value="3.15 A"/>
    <property type="chains" value="A/B=33-367"/>
</dbReference>
<dbReference type="PDB" id="2YCZ">
    <property type="method" value="X-ray"/>
    <property type="resolution" value="3.65 A"/>
    <property type="chains" value="A/B=33-367"/>
</dbReference>
<dbReference type="PDB" id="3ZPQ">
    <property type="method" value="X-ray"/>
    <property type="resolution" value="2.80 A"/>
    <property type="chains" value="A/B=33-368"/>
</dbReference>
<dbReference type="PDB" id="3ZPR">
    <property type="method" value="X-ray"/>
    <property type="resolution" value="2.70 A"/>
    <property type="chains" value="A/B=33-368"/>
</dbReference>
<dbReference type="PDB" id="4AMI">
    <property type="method" value="X-ray"/>
    <property type="resolution" value="3.20 A"/>
    <property type="chains" value="A/B=33-368"/>
</dbReference>
<dbReference type="PDB" id="4AMJ">
    <property type="method" value="X-ray"/>
    <property type="resolution" value="2.30 A"/>
    <property type="chains" value="A/B=33-368"/>
</dbReference>
<dbReference type="PDB" id="4BVN">
    <property type="method" value="X-ray"/>
    <property type="resolution" value="2.10 A"/>
    <property type="chains" value="A=33-368"/>
</dbReference>
<dbReference type="PDB" id="4GPO">
    <property type="method" value="X-ray"/>
    <property type="resolution" value="3.50 A"/>
    <property type="chains" value="A/B=33-368"/>
</dbReference>
<dbReference type="PDB" id="5A8E">
    <property type="method" value="X-ray"/>
    <property type="resolution" value="2.40 A"/>
    <property type="chains" value="A=33-368"/>
</dbReference>
<dbReference type="PDB" id="5F8U">
    <property type="method" value="X-ray"/>
    <property type="resolution" value="3.35 A"/>
    <property type="chains" value="A/B=33-368"/>
</dbReference>
<dbReference type="PDB" id="6H7J">
    <property type="method" value="X-ray"/>
    <property type="resolution" value="2.80 A"/>
    <property type="chains" value="A/B=44-368"/>
</dbReference>
<dbReference type="PDB" id="6H7L">
    <property type="method" value="X-ray"/>
    <property type="resolution" value="2.70 A"/>
    <property type="chains" value="A/B=44-368"/>
</dbReference>
<dbReference type="PDB" id="6H7M">
    <property type="method" value="X-ray"/>
    <property type="resolution" value="2.76 A"/>
    <property type="chains" value="A/B=44-368"/>
</dbReference>
<dbReference type="PDB" id="6H7N">
    <property type="method" value="X-ray"/>
    <property type="resolution" value="2.50 A"/>
    <property type="chains" value="A/B=44-368"/>
</dbReference>
<dbReference type="PDB" id="6H7O">
    <property type="method" value="X-ray"/>
    <property type="resolution" value="2.80 A"/>
    <property type="chains" value="A/B=44-368"/>
</dbReference>
<dbReference type="PDB" id="6IBL">
    <property type="method" value="X-ray"/>
    <property type="resolution" value="2.70 A"/>
    <property type="chains" value="A/B=44-368"/>
</dbReference>
<dbReference type="PDB" id="6TKO">
    <property type="method" value="EM"/>
    <property type="resolution" value="3.30 A"/>
    <property type="chains" value="A=32-357"/>
</dbReference>
<dbReference type="PDB" id="7JJO">
    <property type="method" value="EM"/>
    <property type="resolution" value="2.60 A"/>
    <property type="chains" value="R=31-367"/>
</dbReference>
<dbReference type="PDB" id="7S0F">
    <property type="method" value="EM"/>
    <property type="resolution" value="2.96 A"/>
    <property type="chains" value="R=31-367"/>
</dbReference>
<dbReference type="PDB" id="7S0G">
    <property type="method" value="EM"/>
    <property type="resolution" value="3.86 A"/>
    <property type="chains" value="R=31-367"/>
</dbReference>
<dbReference type="PDB" id="8DCR">
    <property type="method" value="EM"/>
    <property type="resolution" value="2.60 A"/>
    <property type="chains" value="R=33-367"/>
</dbReference>
<dbReference type="PDB" id="8DCS">
    <property type="method" value="EM"/>
    <property type="resolution" value="2.50 A"/>
    <property type="chains" value="R=33-367"/>
</dbReference>
<dbReference type="PDBsum" id="1DEP"/>
<dbReference type="PDBsum" id="2VT4"/>
<dbReference type="PDBsum" id="2Y00"/>
<dbReference type="PDBsum" id="2Y01"/>
<dbReference type="PDBsum" id="2Y02"/>
<dbReference type="PDBsum" id="2Y03"/>
<dbReference type="PDBsum" id="2Y04"/>
<dbReference type="PDBsum" id="2YCW"/>
<dbReference type="PDBsum" id="2YCX"/>
<dbReference type="PDBsum" id="2YCY"/>
<dbReference type="PDBsum" id="2YCZ"/>
<dbReference type="PDBsum" id="3ZPQ"/>
<dbReference type="PDBsum" id="3ZPR"/>
<dbReference type="PDBsum" id="4AMI"/>
<dbReference type="PDBsum" id="4AMJ"/>
<dbReference type="PDBsum" id="4BVN"/>
<dbReference type="PDBsum" id="4GPO"/>
<dbReference type="PDBsum" id="5A8E"/>
<dbReference type="PDBsum" id="5F8U"/>
<dbReference type="PDBsum" id="6H7J"/>
<dbReference type="PDBsum" id="6H7L"/>
<dbReference type="PDBsum" id="6H7M"/>
<dbReference type="PDBsum" id="6H7N"/>
<dbReference type="PDBsum" id="6H7O"/>
<dbReference type="PDBsum" id="6IBL"/>
<dbReference type="PDBsum" id="6TKO"/>
<dbReference type="PDBsum" id="7JJO"/>
<dbReference type="PDBsum" id="7S0F"/>
<dbReference type="PDBsum" id="7S0G"/>
<dbReference type="PDBsum" id="8DCR"/>
<dbReference type="PDBsum" id="8DCS"/>
<dbReference type="EMDB" id="EMD-10515"/>
<dbReference type="EMDB" id="EMD-22357"/>
<dbReference type="EMDB" id="EMD-24789"/>
<dbReference type="EMDB" id="EMD-24790"/>
<dbReference type="SMR" id="P07700"/>
<dbReference type="DIP" id="DIP-60236N"/>
<dbReference type="IntAct" id="P07700">
    <property type="interactions" value="1"/>
</dbReference>
<dbReference type="GlyCosmos" id="P07700">
    <property type="glycosylation" value="1 site, No reported glycans"/>
</dbReference>
<dbReference type="GeneID" id="100303680"/>
<dbReference type="KEGG" id="mgp:100303680"/>
<dbReference type="CTD" id="153"/>
<dbReference type="InParanoid" id="P07700"/>
<dbReference type="OrthoDB" id="5975661at2759"/>
<dbReference type="EvolutionaryTrace" id="P07700"/>
<dbReference type="Proteomes" id="UP000001645">
    <property type="component" value="Unplaced"/>
</dbReference>
<dbReference type="GO" id="GO:0005769">
    <property type="term" value="C:early endosome"/>
    <property type="evidence" value="ECO:0000250"/>
    <property type="project" value="UniProtKB"/>
</dbReference>
<dbReference type="GO" id="GO:0016020">
    <property type="term" value="C:membrane"/>
    <property type="evidence" value="ECO:0000314"/>
    <property type="project" value="AgBase"/>
</dbReference>
<dbReference type="GO" id="GO:0005886">
    <property type="term" value="C:plasma membrane"/>
    <property type="evidence" value="ECO:0000314"/>
    <property type="project" value="AgBase"/>
</dbReference>
<dbReference type="GO" id="GO:0004940">
    <property type="term" value="F:beta1-adrenergic receptor activity"/>
    <property type="evidence" value="ECO:0000314"/>
    <property type="project" value="AgBase"/>
</dbReference>
<dbReference type="GO" id="GO:0042802">
    <property type="term" value="F:identical protein binding"/>
    <property type="evidence" value="ECO:0000353"/>
    <property type="project" value="IntAct"/>
</dbReference>
<dbReference type="GO" id="GO:0071880">
    <property type="term" value="P:adenylate cyclase-activating adrenergic receptor signaling pathway"/>
    <property type="evidence" value="ECO:0000250"/>
    <property type="project" value="UniProtKB"/>
</dbReference>
<dbReference type="GO" id="GO:0002025">
    <property type="term" value="P:norepinephrine-epinephrine-mediated vasodilation involved in regulation of systemic arterial blood pressure"/>
    <property type="evidence" value="ECO:0007669"/>
    <property type="project" value="TreeGrafter"/>
</dbReference>
<dbReference type="GO" id="GO:0045823">
    <property type="term" value="P:positive regulation of heart contraction"/>
    <property type="evidence" value="ECO:0007669"/>
    <property type="project" value="InterPro"/>
</dbReference>
<dbReference type="GO" id="GO:0043410">
    <property type="term" value="P:positive regulation of MAPK cascade"/>
    <property type="evidence" value="ECO:0007669"/>
    <property type="project" value="TreeGrafter"/>
</dbReference>
<dbReference type="GO" id="GO:0045187">
    <property type="term" value="P:regulation of circadian sleep/wake cycle, sleep"/>
    <property type="evidence" value="ECO:0000250"/>
    <property type="project" value="UniProtKB"/>
</dbReference>
<dbReference type="CDD" id="cd15958">
    <property type="entry name" value="7tmA_Beta1_AR"/>
    <property type="match status" value="1"/>
</dbReference>
<dbReference type="FunFam" id="1.20.1070.10:FF:000057">
    <property type="entry name" value="Beta-1 adrenergic receptor"/>
    <property type="match status" value="1"/>
</dbReference>
<dbReference type="Gene3D" id="1.20.1070.10">
    <property type="entry name" value="Rhodopsin 7-helix transmembrane proteins"/>
    <property type="match status" value="1"/>
</dbReference>
<dbReference type="InterPro" id="IPR002233">
    <property type="entry name" value="ADR_fam"/>
</dbReference>
<dbReference type="InterPro" id="IPR000507">
    <property type="entry name" value="ADRB1_rcpt"/>
</dbReference>
<dbReference type="InterPro" id="IPR000276">
    <property type="entry name" value="GPCR_Rhodpsn"/>
</dbReference>
<dbReference type="InterPro" id="IPR017452">
    <property type="entry name" value="GPCR_Rhodpsn_7TM"/>
</dbReference>
<dbReference type="PANTHER" id="PTHR24248">
    <property type="entry name" value="ADRENERGIC RECEPTOR-RELATED G-PROTEIN COUPLED RECEPTOR"/>
    <property type="match status" value="1"/>
</dbReference>
<dbReference type="PANTHER" id="PTHR24248:SF54">
    <property type="entry name" value="BETA-1 ADRENERGIC RECEPTOR"/>
    <property type="match status" value="1"/>
</dbReference>
<dbReference type="Pfam" id="PF00001">
    <property type="entry name" value="7tm_1"/>
    <property type="match status" value="1"/>
</dbReference>
<dbReference type="PRINTS" id="PR01103">
    <property type="entry name" value="ADRENERGICR"/>
</dbReference>
<dbReference type="PRINTS" id="PR00561">
    <property type="entry name" value="ADRENRGCB1AR"/>
</dbReference>
<dbReference type="PRINTS" id="PR00237">
    <property type="entry name" value="GPCRRHODOPSN"/>
</dbReference>
<dbReference type="SMART" id="SM01381">
    <property type="entry name" value="7TM_GPCR_Srsx"/>
    <property type="match status" value="1"/>
</dbReference>
<dbReference type="SUPFAM" id="SSF81321">
    <property type="entry name" value="Family A G protein-coupled receptor-like"/>
    <property type="match status" value="1"/>
</dbReference>
<dbReference type="PROSITE" id="PS00237">
    <property type="entry name" value="G_PROTEIN_RECEP_F1_1"/>
    <property type="match status" value="1"/>
</dbReference>
<dbReference type="PROSITE" id="PS50262">
    <property type="entry name" value="G_PROTEIN_RECEP_F1_2"/>
    <property type="match status" value="1"/>
</dbReference>
<organism>
    <name type="scientific">Meleagris gallopavo</name>
    <name type="common">Wild turkey</name>
    <dbReference type="NCBI Taxonomy" id="9103"/>
    <lineage>
        <taxon>Eukaryota</taxon>
        <taxon>Metazoa</taxon>
        <taxon>Chordata</taxon>
        <taxon>Craniata</taxon>
        <taxon>Vertebrata</taxon>
        <taxon>Euteleostomi</taxon>
        <taxon>Archelosauria</taxon>
        <taxon>Archosauria</taxon>
        <taxon>Dinosauria</taxon>
        <taxon>Saurischia</taxon>
        <taxon>Theropoda</taxon>
        <taxon>Coelurosauria</taxon>
        <taxon>Aves</taxon>
        <taxon>Neognathae</taxon>
        <taxon>Galloanserae</taxon>
        <taxon>Galliformes</taxon>
        <taxon>Phasianidae</taxon>
        <taxon>Meleagridinae</taxon>
        <taxon>Meleagris</taxon>
    </lineage>
</organism>